<proteinExistence type="evidence at protein level"/>
<protein>
    <recommendedName>
        <fullName>Mortality factor 4-like protein 1</fullName>
    </recommendedName>
    <alternativeName>
        <fullName>MORF-related gene 15 protein</fullName>
    </alternativeName>
    <alternativeName>
        <fullName>Testis-expressed gene 189 protein</fullName>
    </alternativeName>
    <alternativeName>
        <fullName>Transcription factor-like protein MRG15</fullName>
    </alternativeName>
</protein>
<dbReference type="EMBL" id="AF319620">
    <property type="protein sequence ID" value="AAK07406.1"/>
    <property type="molecule type" value="mRNA"/>
</dbReference>
<dbReference type="EMBL" id="AF319621">
    <property type="protein sequence ID" value="AAK07407.1"/>
    <property type="molecule type" value="mRNA"/>
</dbReference>
<dbReference type="EMBL" id="AK079115">
    <property type="protein sequence ID" value="BAC37546.1"/>
    <property type="molecule type" value="mRNA"/>
</dbReference>
<dbReference type="EMBL" id="AK016414">
    <property type="protein sequence ID" value="BAB30219.1"/>
    <property type="molecule type" value="mRNA"/>
</dbReference>
<dbReference type="EMBL" id="BC003894">
    <property type="protein sequence ID" value="AAH03894.1"/>
    <property type="molecule type" value="mRNA"/>
</dbReference>
<dbReference type="EMBL" id="BC017619">
    <property type="protein sequence ID" value="AAH17619.1"/>
    <property type="molecule type" value="mRNA"/>
</dbReference>
<dbReference type="EMBL" id="BC083118">
    <property type="protein sequence ID" value="AAH83118.1"/>
    <property type="molecule type" value="mRNA"/>
</dbReference>
<dbReference type="EMBL" id="BC085103">
    <property type="protein sequence ID" value="AAH85103.1"/>
    <property type="molecule type" value="mRNA"/>
</dbReference>
<dbReference type="CCDS" id="CCDS23400.1">
    <molecule id="P60762-1"/>
</dbReference>
<dbReference type="CCDS" id="CCDS52885.1">
    <molecule id="P60762-2"/>
</dbReference>
<dbReference type="RefSeq" id="NP_001034236.1">
    <molecule id="P60762-1"/>
    <property type="nucleotide sequence ID" value="NM_001039147.2"/>
</dbReference>
<dbReference type="RefSeq" id="NP_077751.1">
    <molecule id="P60762-2"/>
    <property type="nucleotide sequence ID" value="NM_024431.3"/>
</dbReference>
<dbReference type="BMRB" id="P60762"/>
<dbReference type="SMR" id="P60762"/>
<dbReference type="BioGRID" id="204126">
    <property type="interactions" value="18"/>
</dbReference>
<dbReference type="ComplexPortal" id="CPX-990">
    <property type="entry name" value="NuA4 histone acetyltransferase complex"/>
</dbReference>
<dbReference type="FunCoup" id="P60762">
    <property type="interactions" value="2697"/>
</dbReference>
<dbReference type="IntAct" id="P60762">
    <property type="interactions" value="4"/>
</dbReference>
<dbReference type="MINT" id="P60762"/>
<dbReference type="STRING" id="10090.ENSMUSP00000082346"/>
<dbReference type="iPTMnet" id="P60762"/>
<dbReference type="PhosphoSitePlus" id="P60762"/>
<dbReference type="PaxDb" id="10090-ENSMUSP00000082346"/>
<dbReference type="PeptideAtlas" id="P60762"/>
<dbReference type="ProteomicsDB" id="252584">
    <molecule id="P60762-1"/>
</dbReference>
<dbReference type="ProteomicsDB" id="252585">
    <molecule id="P60762-2"/>
</dbReference>
<dbReference type="Pumba" id="P60762"/>
<dbReference type="DNASU" id="21761"/>
<dbReference type="Ensembl" id="ENSMUST00000085248.12">
    <molecule id="P60762-1"/>
    <property type="protein sequence ID" value="ENSMUSP00000082346.6"/>
    <property type="gene ID" value="ENSMUSG00000062270.15"/>
</dbReference>
<dbReference type="Ensembl" id="ENSMUST00000169860.8">
    <molecule id="P60762-2"/>
    <property type="protein sequence ID" value="ENSMUSP00000132020.2"/>
    <property type="gene ID" value="ENSMUSG00000062270.15"/>
</dbReference>
<dbReference type="GeneID" id="21761"/>
<dbReference type="KEGG" id="mmu:21761"/>
<dbReference type="UCSC" id="uc009qzw.2">
    <molecule id="P60762-1"/>
    <property type="organism name" value="mouse"/>
</dbReference>
<dbReference type="AGR" id="MGI:1096551"/>
<dbReference type="CTD" id="10933"/>
<dbReference type="MGI" id="MGI:1096551">
    <property type="gene designation" value="Morf4l1"/>
</dbReference>
<dbReference type="VEuPathDB" id="HostDB:ENSMUSG00000062270"/>
<dbReference type="eggNOG" id="KOG3001">
    <property type="taxonomic scope" value="Eukaryota"/>
</dbReference>
<dbReference type="GeneTree" id="ENSGT00950000182965"/>
<dbReference type="InParanoid" id="P60762"/>
<dbReference type="OMA" id="GLQTYFD"/>
<dbReference type="OrthoDB" id="124855at2759"/>
<dbReference type="PhylomeDB" id="P60762"/>
<dbReference type="TreeFam" id="TF323400"/>
<dbReference type="BioGRID-ORCS" id="21761">
    <property type="hits" value="5 hits in 118 CRISPR screens"/>
</dbReference>
<dbReference type="ChiTaRS" id="Morf4l1">
    <property type="organism name" value="mouse"/>
</dbReference>
<dbReference type="PRO" id="PR:P60762"/>
<dbReference type="Proteomes" id="UP000000589">
    <property type="component" value="Chromosome 9"/>
</dbReference>
<dbReference type="RNAct" id="P60762">
    <property type="molecule type" value="protein"/>
</dbReference>
<dbReference type="Bgee" id="ENSMUSG00000062270">
    <property type="expression patterns" value="Expressed in embryonic post-anal tail and 71 other cell types or tissues"/>
</dbReference>
<dbReference type="ExpressionAtlas" id="P60762">
    <property type="expression patterns" value="baseline and differential"/>
</dbReference>
<dbReference type="GO" id="GO:0035267">
    <property type="term" value="C:NuA4 histone acetyltransferase complex"/>
    <property type="evidence" value="ECO:0000250"/>
    <property type="project" value="UniProtKB"/>
</dbReference>
<dbReference type="GO" id="GO:0016607">
    <property type="term" value="C:nuclear speck"/>
    <property type="evidence" value="ECO:0007669"/>
    <property type="project" value="Ensembl"/>
</dbReference>
<dbReference type="GO" id="GO:0000786">
    <property type="term" value="C:nucleosome"/>
    <property type="evidence" value="ECO:0000266"/>
    <property type="project" value="ComplexPortal"/>
</dbReference>
<dbReference type="GO" id="GO:0070822">
    <property type="term" value="C:Sin3-type complex"/>
    <property type="evidence" value="ECO:0000250"/>
    <property type="project" value="UniProtKB"/>
</dbReference>
<dbReference type="GO" id="GO:0003682">
    <property type="term" value="F:chromatin binding"/>
    <property type="evidence" value="ECO:0000314"/>
    <property type="project" value="MGI"/>
</dbReference>
<dbReference type="GO" id="GO:0008283">
    <property type="term" value="P:cell population proliferation"/>
    <property type="evidence" value="ECO:0000315"/>
    <property type="project" value="MGI"/>
</dbReference>
<dbReference type="GO" id="GO:0006338">
    <property type="term" value="P:chromatin remodeling"/>
    <property type="evidence" value="ECO:0000304"/>
    <property type="project" value="MGI"/>
</dbReference>
<dbReference type="GO" id="GO:0000724">
    <property type="term" value="P:double-strand break repair via homologous recombination"/>
    <property type="evidence" value="ECO:0000250"/>
    <property type="project" value="UniProtKB"/>
</dbReference>
<dbReference type="GO" id="GO:0048144">
    <property type="term" value="P:fibroblast proliferation"/>
    <property type="evidence" value="ECO:0000315"/>
    <property type="project" value="MGI"/>
</dbReference>
<dbReference type="GO" id="GO:0045893">
    <property type="term" value="P:positive regulation of DNA-templated transcription"/>
    <property type="evidence" value="ECO:0000303"/>
    <property type="project" value="ComplexPortal"/>
</dbReference>
<dbReference type="GO" id="GO:1905168">
    <property type="term" value="P:positive regulation of double-strand break repair via homologous recombination"/>
    <property type="evidence" value="ECO:0000266"/>
    <property type="project" value="ComplexPortal"/>
</dbReference>
<dbReference type="GO" id="GO:0042981">
    <property type="term" value="P:regulation of apoptotic process"/>
    <property type="evidence" value="ECO:0000303"/>
    <property type="project" value="ComplexPortal"/>
</dbReference>
<dbReference type="GO" id="GO:0051726">
    <property type="term" value="P:regulation of cell cycle"/>
    <property type="evidence" value="ECO:0000266"/>
    <property type="project" value="ComplexPortal"/>
</dbReference>
<dbReference type="GO" id="GO:2000779">
    <property type="term" value="P:regulation of double-strand break repair"/>
    <property type="evidence" value="ECO:0000303"/>
    <property type="project" value="ComplexPortal"/>
</dbReference>
<dbReference type="CDD" id="cd18983">
    <property type="entry name" value="CBD_MSL3_like"/>
    <property type="match status" value="1"/>
</dbReference>
<dbReference type="FunFam" id="1.10.274.30:FF:000001">
    <property type="entry name" value="Mortality factor 4-like protein 1"/>
    <property type="match status" value="1"/>
</dbReference>
<dbReference type="Gene3D" id="2.30.30.140">
    <property type="match status" value="1"/>
</dbReference>
<dbReference type="Gene3D" id="1.10.274.30">
    <property type="entry name" value="MRG domain"/>
    <property type="match status" value="1"/>
</dbReference>
<dbReference type="InterPro" id="IPR016197">
    <property type="entry name" value="Chromo-like_dom_sf"/>
</dbReference>
<dbReference type="InterPro" id="IPR008676">
    <property type="entry name" value="MRG"/>
</dbReference>
<dbReference type="InterPro" id="IPR038217">
    <property type="entry name" value="MRG_C_sf"/>
</dbReference>
<dbReference type="InterPro" id="IPR026541">
    <property type="entry name" value="MRG_dom"/>
</dbReference>
<dbReference type="InterPro" id="IPR025995">
    <property type="entry name" value="Tudor-knot"/>
</dbReference>
<dbReference type="PANTHER" id="PTHR10880">
    <property type="entry name" value="MORTALITY FACTOR 4-LIKE PROTEIN"/>
    <property type="match status" value="1"/>
</dbReference>
<dbReference type="PANTHER" id="PTHR10880:SF29">
    <property type="entry name" value="MORTALITY FACTOR 4-LIKE PROTEIN 1"/>
    <property type="match status" value="1"/>
</dbReference>
<dbReference type="Pfam" id="PF05712">
    <property type="entry name" value="MRG"/>
    <property type="match status" value="1"/>
</dbReference>
<dbReference type="Pfam" id="PF11717">
    <property type="entry name" value="Tudor-knot"/>
    <property type="match status" value="1"/>
</dbReference>
<dbReference type="PIRSF" id="PIRSF038133">
    <property type="entry name" value="HAT_Nua4_EAF3/MRG15"/>
    <property type="match status" value="1"/>
</dbReference>
<dbReference type="SUPFAM" id="SSF54160">
    <property type="entry name" value="Chromo domain-like"/>
    <property type="match status" value="1"/>
</dbReference>
<dbReference type="PROSITE" id="PS51640">
    <property type="entry name" value="MRG"/>
    <property type="match status" value="1"/>
</dbReference>
<name>MO4L1_MOUSE</name>
<comment type="function">
    <text evidence="2">Component of the NuA4 histone acetyltransferase (HAT) complex which is involved in transcriptional activation of select genes principally by acetylation of nucleosomal histones H4 and H2A. This modification may both alter nucleosome - DNA interactions and promote interaction of the modified histones with other proteins which positively regulate transcription. This complex may be required for the activation of transcriptional programs associated with oncogene and proto-oncogene mediated growth induction, tumor suppressor mediated growth arrest and replicative senescence, apoptosis, and DNA repair. The NuA4 complex ATPase and helicase activities seem to be, at least in part, contributed by the association of RUVBL1 and RUVBL2 with EP400. NuA4 may also play a direct role in DNA repair when directly recruited to sites of DNA damage. As part of the SIN3B complex represses transcription and counteracts the histone acetyltransferase activity of EP300 through the recognition H3K27ac marks by PHF12 and the activity of the histone deacetylase HDAC2. SIN3B complex is recruited downstream of the constitutively active genes transcriptional start sites through interaction with histones and mitigates histone acetylation and RNA polymerase II progression within transcribed regions contributing to the regulation of transcription. Required for homologous recombination repair (HRR) and resistance to mitomycin C (MMC). Involved in the localization of PALB2, BRCA2 and RAD51, but not BRCA1, to DNA-damage foci.</text>
</comment>
<comment type="subunit">
    <text evidence="2">Component of the NuA4 histone acetyltransferase complex which contains the catalytic subunit KAT5/TIP60 and the subunits EP400, TRRAP/PAF400, BRD8/SMAP, EPC1, DMAP1/DNMAP1, RUVBL1/TIP49, RUVBL2, ING3, actin, ACTL6A/BAF53A, MORF4L1/MRG15, MORF4L2/MRGX, MRGBP, YEATS4/GAS41, VPS72/YL1 and MEAF6. The NuA4 complex interacts with MYC and the adenovirus E1A protein. MORF4L1 may also participate in the formation of NuA4 related complexes which lack the KAT5/TIP60 catalytic subunit, but which include the SWI/SNF related protein SRCAP. Component of the mSin3A histone deacetylase complex, which includes SIN3A, HDAC2, ARID4B, MORF4L1, RBBP4/RbAp48, and RBBP7/RbAp46. May also interact with PHF12 and one or more as yet undefined members of the TLE (transducin-like enhancer of split) family of transcriptional repressors. Component of the SIN3B complex, which includes SIN3B, HDAC2 or HDAC1, PHF12 and MORF4L1. Interacts with RB1 and KAT8. Interacts with the N-terminus of MRFAP1. Found in a complex composed of MORF4L1, MRFAP1 and RB1. Interacts with the entire BRCA complex, which contains BRCA1, PALB2, BRCA2 and RAD51. Interacts with PALB2. Forms a complex with MSL1 and NUPR1.</text>
</comment>
<comment type="interaction">
    <interactant intactId="EBI-2943018">
        <id>P60762</id>
    </interactant>
    <interactant intactId="EBI-1249551">
        <id>Q80Y84</id>
        <label>Kdm5b</label>
    </interactant>
    <organismsDiffer>false</organismsDiffer>
    <experiments>4</experiments>
</comment>
<comment type="subcellular location">
    <subcellularLocation>
        <location evidence="2">Nucleus</location>
    </subcellularLocation>
</comment>
<comment type="alternative products">
    <event type="alternative splicing"/>
    <isoform>
        <id>P60762-1</id>
        <name>1</name>
        <name>Mrg15-b</name>
        <sequence type="displayed"/>
    </isoform>
    <isoform>
        <id>P60762-2</id>
        <name>2</name>
        <name>Mrg15-a</name>
        <sequence type="described" ref="VSP_012890"/>
    </isoform>
</comment>
<accession>P60762</accession>
<accession>Q8BNY9</accession>
<accession>Q99MQ0</accession>
<sequence>MAPKQDPKPKFQEGERVLCFHGPLLYEAKCVKVAIKDKQVKYFIHYSGWNKKSAVRPRRSEKSLKTREDIVALFPVPEGAPSVHHPLLTSSWDEWVPESRVLKYVDTNLQKQRELQKANQEQYAEGKMRGAAPGKKTSGLQQKNVEVKTKKNKQKTPGNGDGGSTSETPQPPRKKRARVDPTVENEETFMNRVEVKVKIPEELKPWLVDDWDLITRQKQLFYLPAKKNVDSILEDYANYKKSRGNTDNKEYAVNEVVAGIKEYFNVMLGTQLLYKFERPQYAEILADHPDAPMSQVYGAPHLLRLFVRIGAMLAYTPLDEKSLALLLNYLHDFLKYLAKNSATLFSASDYEVAPPEYHRKAV</sequence>
<feature type="chain" id="PRO_0000088765" description="Mortality factor 4-like protein 1">
    <location>
        <begin position="1"/>
        <end position="362"/>
    </location>
</feature>
<feature type="domain" description="Tudor-knot" evidence="3">
    <location>
        <begin position="12"/>
        <end position="51"/>
    </location>
</feature>
<feature type="domain" description="MRG" evidence="4">
    <location>
        <begin position="191"/>
        <end position="362"/>
    </location>
</feature>
<feature type="region of interest" description="Interaction with KAT8" evidence="1">
    <location>
        <begin position="26"/>
        <end position="62"/>
    </location>
</feature>
<feature type="region of interest" description="Disordered" evidence="5">
    <location>
        <begin position="113"/>
        <end position="182"/>
    </location>
</feature>
<feature type="region of interest" description="Sufficient for interaction with SIN3A" evidence="1">
    <location>
        <begin position="133"/>
        <end position="266"/>
    </location>
</feature>
<feature type="region of interest" description="Interaction with RB1-1" evidence="1">
    <location>
        <begin position="164"/>
        <end position="230"/>
    </location>
</feature>
<feature type="region of interest" description="Sufficient for interaction with PHF12" evidence="1">
    <location>
        <begin position="188"/>
        <end position="342"/>
    </location>
</feature>
<feature type="region of interest" description="Interaction with RB1-2" evidence="1">
    <location>
        <begin position="323"/>
        <end position="344"/>
    </location>
</feature>
<feature type="short sequence motif" description="Nuclear localization signal" evidence="3">
    <location>
        <begin position="135"/>
        <end position="146"/>
    </location>
</feature>
<feature type="modified residue" description="N6-acetyllysine" evidence="2">
    <location>
        <position position="143"/>
    </location>
</feature>
<feature type="splice variant" id="VSP_012890" description="In isoform 2." evidence="6 7 8">
    <original>KSAVRPRRSEKSLKTREDIVALFPVPEGAPSVHHPLLTSS</original>
    <variation>N</variation>
    <location>
        <begin position="52"/>
        <end position="91"/>
    </location>
</feature>
<organism>
    <name type="scientific">Mus musculus</name>
    <name type="common">Mouse</name>
    <dbReference type="NCBI Taxonomy" id="10090"/>
    <lineage>
        <taxon>Eukaryota</taxon>
        <taxon>Metazoa</taxon>
        <taxon>Chordata</taxon>
        <taxon>Craniata</taxon>
        <taxon>Vertebrata</taxon>
        <taxon>Euteleostomi</taxon>
        <taxon>Mammalia</taxon>
        <taxon>Eutheria</taxon>
        <taxon>Euarchontoglires</taxon>
        <taxon>Glires</taxon>
        <taxon>Rodentia</taxon>
        <taxon>Myomorpha</taxon>
        <taxon>Muroidea</taxon>
        <taxon>Muridae</taxon>
        <taxon>Murinae</taxon>
        <taxon>Mus</taxon>
        <taxon>Mus</taxon>
    </lineage>
</organism>
<keyword id="KW-0007">Acetylation</keyword>
<keyword id="KW-0025">Alternative splicing</keyword>
<keyword id="KW-0156">Chromatin regulator</keyword>
<keyword id="KW-0227">DNA damage</keyword>
<keyword id="KW-0233">DNA recombination</keyword>
<keyword id="KW-0234">DNA repair</keyword>
<keyword id="KW-0341">Growth regulation</keyword>
<keyword id="KW-0539">Nucleus</keyword>
<keyword id="KW-1185">Reference proteome</keyword>
<keyword id="KW-0804">Transcription</keyword>
<keyword id="KW-0805">Transcription regulation</keyword>
<reference key="1">
    <citation type="journal article" date="2001" name="Gene">
        <title>Conservation of the MORF4 related gene family: identification of a new chromo domain subfamily and novel protein motif.</title>
        <authorList>
            <person name="Bertram M.J."/>
            <person name="Pereira-Smith O.M."/>
        </authorList>
    </citation>
    <scope>NUCLEOTIDE SEQUENCE [MRNA] (ISOFORMS 1 AND 2)</scope>
</reference>
<reference key="2">
    <citation type="journal article" date="2005" name="Science">
        <title>The transcriptional landscape of the mammalian genome.</title>
        <authorList>
            <person name="Carninci P."/>
            <person name="Kasukawa T."/>
            <person name="Katayama S."/>
            <person name="Gough J."/>
            <person name="Frith M.C."/>
            <person name="Maeda N."/>
            <person name="Oyama R."/>
            <person name="Ravasi T."/>
            <person name="Lenhard B."/>
            <person name="Wells C."/>
            <person name="Kodzius R."/>
            <person name="Shimokawa K."/>
            <person name="Bajic V.B."/>
            <person name="Brenner S.E."/>
            <person name="Batalov S."/>
            <person name="Forrest A.R."/>
            <person name="Zavolan M."/>
            <person name="Davis M.J."/>
            <person name="Wilming L.G."/>
            <person name="Aidinis V."/>
            <person name="Allen J.E."/>
            <person name="Ambesi-Impiombato A."/>
            <person name="Apweiler R."/>
            <person name="Aturaliya R.N."/>
            <person name="Bailey T.L."/>
            <person name="Bansal M."/>
            <person name="Baxter L."/>
            <person name="Beisel K.W."/>
            <person name="Bersano T."/>
            <person name="Bono H."/>
            <person name="Chalk A.M."/>
            <person name="Chiu K.P."/>
            <person name="Choudhary V."/>
            <person name="Christoffels A."/>
            <person name="Clutterbuck D.R."/>
            <person name="Crowe M.L."/>
            <person name="Dalla E."/>
            <person name="Dalrymple B.P."/>
            <person name="de Bono B."/>
            <person name="Della Gatta G."/>
            <person name="di Bernardo D."/>
            <person name="Down T."/>
            <person name="Engstrom P."/>
            <person name="Fagiolini M."/>
            <person name="Faulkner G."/>
            <person name="Fletcher C.F."/>
            <person name="Fukushima T."/>
            <person name="Furuno M."/>
            <person name="Futaki S."/>
            <person name="Gariboldi M."/>
            <person name="Georgii-Hemming P."/>
            <person name="Gingeras T.R."/>
            <person name="Gojobori T."/>
            <person name="Green R.E."/>
            <person name="Gustincich S."/>
            <person name="Harbers M."/>
            <person name="Hayashi Y."/>
            <person name="Hensch T.K."/>
            <person name="Hirokawa N."/>
            <person name="Hill D."/>
            <person name="Huminiecki L."/>
            <person name="Iacono M."/>
            <person name="Ikeo K."/>
            <person name="Iwama A."/>
            <person name="Ishikawa T."/>
            <person name="Jakt M."/>
            <person name="Kanapin A."/>
            <person name="Katoh M."/>
            <person name="Kawasawa Y."/>
            <person name="Kelso J."/>
            <person name="Kitamura H."/>
            <person name="Kitano H."/>
            <person name="Kollias G."/>
            <person name="Krishnan S.P."/>
            <person name="Kruger A."/>
            <person name="Kummerfeld S.K."/>
            <person name="Kurochkin I.V."/>
            <person name="Lareau L.F."/>
            <person name="Lazarevic D."/>
            <person name="Lipovich L."/>
            <person name="Liu J."/>
            <person name="Liuni S."/>
            <person name="McWilliam S."/>
            <person name="Madan Babu M."/>
            <person name="Madera M."/>
            <person name="Marchionni L."/>
            <person name="Matsuda H."/>
            <person name="Matsuzawa S."/>
            <person name="Miki H."/>
            <person name="Mignone F."/>
            <person name="Miyake S."/>
            <person name="Morris K."/>
            <person name="Mottagui-Tabar S."/>
            <person name="Mulder N."/>
            <person name="Nakano N."/>
            <person name="Nakauchi H."/>
            <person name="Ng P."/>
            <person name="Nilsson R."/>
            <person name="Nishiguchi S."/>
            <person name="Nishikawa S."/>
            <person name="Nori F."/>
            <person name="Ohara O."/>
            <person name="Okazaki Y."/>
            <person name="Orlando V."/>
            <person name="Pang K.C."/>
            <person name="Pavan W.J."/>
            <person name="Pavesi G."/>
            <person name="Pesole G."/>
            <person name="Petrovsky N."/>
            <person name="Piazza S."/>
            <person name="Reed J."/>
            <person name="Reid J.F."/>
            <person name="Ring B.Z."/>
            <person name="Ringwald M."/>
            <person name="Rost B."/>
            <person name="Ruan Y."/>
            <person name="Salzberg S.L."/>
            <person name="Sandelin A."/>
            <person name="Schneider C."/>
            <person name="Schoenbach C."/>
            <person name="Sekiguchi K."/>
            <person name="Semple C.A."/>
            <person name="Seno S."/>
            <person name="Sessa L."/>
            <person name="Sheng Y."/>
            <person name="Shibata Y."/>
            <person name="Shimada H."/>
            <person name="Shimada K."/>
            <person name="Silva D."/>
            <person name="Sinclair B."/>
            <person name="Sperling S."/>
            <person name="Stupka E."/>
            <person name="Sugiura K."/>
            <person name="Sultana R."/>
            <person name="Takenaka Y."/>
            <person name="Taki K."/>
            <person name="Tammoja K."/>
            <person name="Tan S.L."/>
            <person name="Tang S."/>
            <person name="Taylor M.S."/>
            <person name="Tegner J."/>
            <person name="Teichmann S.A."/>
            <person name="Ueda H.R."/>
            <person name="van Nimwegen E."/>
            <person name="Verardo R."/>
            <person name="Wei C.L."/>
            <person name="Yagi K."/>
            <person name="Yamanishi H."/>
            <person name="Zabarovsky E."/>
            <person name="Zhu S."/>
            <person name="Zimmer A."/>
            <person name="Hide W."/>
            <person name="Bult C."/>
            <person name="Grimmond S.M."/>
            <person name="Teasdale R.D."/>
            <person name="Liu E.T."/>
            <person name="Brusic V."/>
            <person name="Quackenbush J."/>
            <person name="Wahlestedt C."/>
            <person name="Mattick J.S."/>
            <person name="Hume D.A."/>
            <person name="Kai C."/>
            <person name="Sasaki D."/>
            <person name="Tomaru Y."/>
            <person name="Fukuda S."/>
            <person name="Kanamori-Katayama M."/>
            <person name="Suzuki M."/>
            <person name="Aoki J."/>
            <person name="Arakawa T."/>
            <person name="Iida J."/>
            <person name="Imamura K."/>
            <person name="Itoh M."/>
            <person name="Kato T."/>
            <person name="Kawaji H."/>
            <person name="Kawagashira N."/>
            <person name="Kawashima T."/>
            <person name="Kojima M."/>
            <person name="Kondo S."/>
            <person name="Konno H."/>
            <person name="Nakano K."/>
            <person name="Ninomiya N."/>
            <person name="Nishio T."/>
            <person name="Okada M."/>
            <person name="Plessy C."/>
            <person name="Shibata K."/>
            <person name="Shiraki T."/>
            <person name="Suzuki S."/>
            <person name="Tagami M."/>
            <person name="Waki K."/>
            <person name="Watahiki A."/>
            <person name="Okamura-Oho Y."/>
            <person name="Suzuki H."/>
            <person name="Kawai J."/>
            <person name="Hayashizaki Y."/>
        </authorList>
    </citation>
    <scope>NUCLEOTIDE SEQUENCE [LARGE SCALE MRNA] (ISOFORM 2)</scope>
    <source>
        <strain>C57BL/6J</strain>
        <tissue>Testis</tissue>
    </source>
</reference>
<reference key="3">
    <citation type="journal article" date="2004" name="Genome Res.">
        <title>The status, quality, and expansion of the NIH full-length cDNA project: the Mammalian Gene Collection (MGC).</title>
        <authorList>
            <consortium name="The MGC Project Team"/>
        </authorList>
    </citation>
    <scope>NUCLEOTIDE SEQUENCE [LARGE SCALE MRNA] (ISOFORMS 1 AND 2)</scope>
    <source>
        <strain>C57BL/6J</strain>
        <strain>FVB/N</strain>
        <tissue>Mammary tumor</tissue>
        <tissue>Retina</tissue>
        <tissue>Salivary gland</tissue>
    </source>
</reference>
<reference key="4">
    <citation type="journal article" date="2004" name="Mol. Cell. Biol.">
        <title>PAM14, a novel MRG- and Rb-associated protein, is not required for development and T-cell function in mice.</title>
        <authorList>
            <person name="Tominaga K."/>
            <person name="Magee D.M."/>
            <person name="Matzuk M.M."/>
            <person name="Pereira-Smith O.M."/>
        </authorList>
    </citation>
    <scope>IDENTIFICATION IN COMPLEX WITH MRFAP1 AND RB1</scope>
</reference>
<reference key="5">
    <citation type="journal article" date="2010" name="Cell">
        <title>A tissue-specific atlas of mouse protein phosphorylation and expression.</title>
        <authorList>
            <person name="Huttlin E.L."/>
            <person name="Jedrychowski M.P."/>
            <person name="Elias J.E."/>
            <person name="Goswami T."/>
            <person name="Rad R."/>
            <person name="Beausoleil S.A."/>
            <person name="Villen J."/>
            <person name="Haas W."/>
            <person name="Sowa M.E."/>
            <person name="Gygi S.P."/>
        </authorList>
    </citation>
    <scope>IDENTIFICATION BY MASS SPECTROMETRY [LARGE SCALE ANALYSIS]</scope>
    <source>
        <tissue>Brain</tissue>
        <tissue>Kidney</tissue>
        <tissue>Spleen</tissue>
        <tissue>Testis</tissue>
    </source>
</reference>
<evidence type="ECO:0000250" key="1"/>
<evidence type="ECO:0000250" key="2">
    <source>
        <dbReference type="UniProtKB" id="Q9UBU8"/>
    </source>
</evidence>
<evidence type="ECO:0000255" key="3"/>
<evidence type="ECO:0000255" key="4">
    <source>
        <dbReference type="PROSITE-ProRule" id="PRU00972"/>
    </source>
</evidence>
<evidence type="ECO:0000256" key="5">
    <source>
        <dbReference type="SAM" id="MobiDB-lite"/>
    </source>
</evidence>
<evidence type="ECO:0000303" key="6">
    <source>
    </source>
</evidence>
<evidence type="ECO:0000303" key="7">
    <source>
    </source>
</evidence>
<evidence type="ECO:0000303" key="8">
    <source>
    </source>
</evidence>
<gene>
    <name type="primary">Morf4l1</name>
    <name type="synonym">Mrg15</name>
    <name type="synonym">Tex189</name>
</gene>